<organism>
    <name type="scientific">Legionella pneumophila subsp. pneumophila (strain Philadelphia 1 / ATCC 33152 / DSM 7513)</name>
    <dbReference type="NCBI Taxonomy" id="272624"/>
    <lineage>
        <taxon>Bacteria</taxon>
        <taxon>Pseudomonadati</taxon>
        <taxon>Pseudomonadota</taxon>
        <taxon>Gammaproteobacteria</taxon>
        <taxon>Legionellales</taxon>
        <taxon>Legionellaceae</taxon>
        <taxon>Legionella</taxon>
    </lineage>
</organism>
<evidence type="ECO:0000255" key="1">
    <source>
        <dbReference type="HAMAP-Rule" id="MF_00023"/>
    </source>
</evidence>
<evidence type="ECO:0000256" key="2">
    <source>
        <dbReference type="SAM" id="MobiDB-lite"/>
    </source>
</evidence>
<sequence length="156" mass="18061">MTTKKQPDSTIALNRKAGFDYFIEDQYEAGLVLEGWEVKSLRAGKINLSDSHVIIKYGEAFLLGAQIQPLPTASTHFIPDPIRTRKLLMNKKELNHLIGSVERQGYTIVPLSLYWKKNKIKIKIALAKGKKEHDKRDTIKDREWQRDRSRIMKKNT</sequence>
<feature type="chain" id="PRO_0000102968" description="SsrA-binding protein">
    <location>
        <begin position="1"/>
        <end position="156"/>
    </location>
</feature>
<feature type="region of interest" description="Disordered" evidence="2">
    <location>
        <begin position="135"/>
        <end position="156"/>
    </location>
</feature>
<feature type="compositionally biased region" description="Basic and acidic residues" evidence="2">
    <location>
        <begin position="135"/>
        <end position="150"/>
    </location>
</feature>
<proteinExistence type="inferred from homology"/>
<comment type="function">
    <text evidence="1">Required for rescue of stalled ribosomes mediated by trans-translation. Binds to transfer-messenger RNA (tmRNA), required for stable association of tmRNA with ribosomes. tmRNA and SmpB together mimic tRNA shape, replacing the anticodon stem-loop with SmpB. tmRNA is encoded by the ssrA gene; the 2 termini fold to resemble tRNA(Ala) and it encodes a 'tag peptide', a short internal open reading frame. During trans-translation Ala-aminoacylated tmRNA acts like a tRNA, entering the A-site of stalled ribosomes, displacing the stalled mRNA. The ribosome then switches to translate the ORF on the tmRNA; the nascent peptide is terminated with the 'tag peptide' encoded by the tmRNA and targeted for degradation. The ribosome is freed to recommence translation, which seems to be the essential function of trans-translation.</text>
</comment>
<comment type="subcellular location">
    <subcellularLocation>
        <location evidence="1">Cytoplasm</location>
    </subcellularLocation>
    <text evidence="1">The tmRNA-SmpB complex associates with stalled 70S ribosomes.</text>
</comment>
<comment type="similarity">
    <text evidence="1">Belongs to the SmpB family.</text>
</comment>
<dbReference type="EMBL" id="AE017354">
    <property type="protein sequence ID" value="AAU28887.1"/>
    <property type="molecule type" value="Genomic_DNA"/>
</dbReference>
<dbReference type="RefSeq" id="WP_010948526.1">
    <property type="nucleotide sequence ID" value="NC_002942.5"/>
</dbReference>
<dbReference type="RefSeq" id="YP_096834.1">
    <property type="nucleotide sequence ID" value="NC_002942.5"/>
</dbReference>
<dbReference type="SMR" id="Q5ZRP1"/>
<dbReference type="STRING" id="272624.lpg2839"/>
<dbReference type="PaxDb" id="272624-lpg2839"/>
<dbReference type="GeneID" id="57036837"/>
<dbReference type="KEGG" id="lpn:lpg2839"/>
<dbReference type="PATRIC" id="fig|272624.6.peg.3024"/>
<dbReference type="eggNOG" id="COG0691">
    <property type="taxonomic scope" value="Bacteria"/>
</dbReference>
<dbReference type="HOGENOM" id="CLU_108953_3_0_6"/>
<dbReference type="OrthoDB" id="9805462at2"/>
<dbReference type="Proteomes" id="UP000000609">
    <property type="component" value="Chromosome"/>
</dbReference>
<dbReference type="GO" id="GO:0005829">
    <property type="term" value="C:cytosol"/>
    <property type="evidence" value="ECO:0007669"/>
    <property type="project" value="TreeGrafter"/>
</dbReference>
<dbReference type="GO" id="GO:0003723">
    <property type="term" value="F:RNA binding"/>
    <property type="evidence" value="ECO:0007669"/>
    <property type="project" value="UniProtKB-UniRule"/>
</dbReference>
<dbReference type="GO" id="GO:0070929">
    <property type="term" value="P:trans-translation"/>
    <property type="evidence" value="ECO:0007669"/>
    <property type="project" value="UniProtKB-UniRule"/>
</dbReference>
<dbReference type="CDD" id="cd09294">
    <property type="entry name" value="SmpB"/>
    <property type="match status" value="1"/>
</dbReference>
<dbReference type="Gene3D" id="2.40.280.10">
    <property type="match status" value="1"/>
</dbReference>
<dbReference type="HAMAP" id="MF_00023">
    <property type="entry name" value="SmpB"/>
    <property type="match status" value="1"/>
</dbReference>
<dbReference type="InterPro" id="IPR023620">
    <property type="entry name" value="SmpB"/>
</dbReference>
<dbReference type="InterPro" id="IPR000037">
    <property type="entry name" value="SsrA-bd_prot"/>
</dbReference>
<dbReference type="InterPro" id="IPR020081">
    <property type="entry name" value="SsrA-bd_prot_CS"/>
</dbReference>
<dbReference type="NCBIfam" id="NF003843">
    <property type="entry name" value="PRK05422.1"/>
    <property type="match status" value="1"/>
</dbReference>
<dbReference type="NCBIfam" id="TIGR00086">
    <property type="entry name" value="smpB"/>
    <property type="match status" value="1"/>
</dbReference>
<dbReference type="PANTHER" id="PTHR30308:SF2">
    <property type="entry name" value="SSRA-BINDING PROTEIN"/>
    <property type="match status" value="1"/>
</dbReference>
<dbReference type="PANTHER" id="PTHR30308">
    <property type="entry name" value="TMRNA-BINDING COMPONENT OF TRANS-TRANSLATION TAGGING COMPLEX"/>
    <property type="match status" value="1"/>
</dbReference>
<dbReference type="Pfam" id="PF01668">
    <property type="entry name" value="SmpB"/>
    <property type="match status" value="1"/>
</dbReference>
<dbReference type="SUPFAM" id="SSF74982">
    <property type="entry name" value="Small protein B (SmpB)"/>
    <property type="match status" value="1"/>
</dbReference>
<dbReference type="PROSITE" id="PS01317">
    <property type="entry name" value="SSRP"/>
    <property type="match status" value="1"/>
</dbReference>
<keyword id="KW-0963">Cytoplasm</keyword>
<keyword id="KW-1185">Reference proteome</keyword>
<keyword id="KW-0694">RNA-binding</keyword>
<accession>Q5ZRP1</accession>
<reference key="1">
    <citation type="journal article" date="2004" name="Science">
        <title>The genomic sequence of the accidental pathogen Legionella pneumophila.</title>
        <authorList>
            <person name="Chien M."/>
            <person name="Morozova I."/>
            <person name="Shi S."/>
            <person name="Sheng H."/>
            <person name="Chen J."/>
            <person name="Gomez S.M."/>
            <person name="Asamani G."/>
            <person name="Hill K."/>
            <person name="Nuara J."/>
            <person name="Feder M."/>
            <person name="Rineer J."/>
            <person name="Greenberg J.J."/>
            <person name="Steshenko V."/>
            <person name="Park S.H."/>
            <person name="Zhao B."/>
            <person name="Teplitskaya E."/>
            <person name="Edwards J.R."/>
            <person name="Pampou S."/>
            <person name="Georghiou A."/>
            <person name="Chou I.-C."/>
            <person name="Iannuccilli W."/>
            <person name="Ulz M.E."/>
            <person name="Kim D.H."/>
            <person name="Geringer-Sameth A."/>
            <person name="Goldsberry C."/>
            <person name="Morozov P."/>
            <person name="Fischer S.G."/>
            <person name="Segal G."/>
            <person name="Qu X."/>
            <person name="Rzhetsky A."/>
            <person name="Zhang P."/>
            <person name="Cayanis E."/>
            <person name="De Jong P.J."/>
            <person name="Ju J."/>
            <person name="Kalachikov S."/>
            <person name="Shuman H.A."/>
            <person name="Russo J.J."/>
        </authorList>
    </citation>
    <scope>NUCLEOTIDE SEQUENCE [LARGE SCALE GENOMIC DNA]</scope>
    <source>
        <strain>Philadelphia 1 / ATCC 33152 / DSM 7513</strain>
    </source>
</reference>
<protein>
    <recommendedName>
        <fullName evidence="1">SsrA-binding protein</fullName>
    </recommendedName>
    <alternativeName>
        <fullName evidence="1">Small protein B</fullName>
    </alternativeName>
</protein>
<gene>
    <name evidence="1" type="primary">smpB</name>
    <name type="ordered locus">lpg2839</name>
</gene>
<name>SSRP_LEGPH</name>